<protein>
    <recommendedName>
        <fullName evidence="1">Large ribosomal subunit protein eL20</fullName>
    </recommendedName>
    <alternativeName>
        <fullName evidence="2">50S ribosomal protein L18Ae</fullName>
    </alternativeName>
    <alternativeName>
        <fullName evidence="1">50S ribosomal protein L20e</fullName>
    </alternativeName>
    <alternativeName>
        <fullName evidence="1">50S ribosomal protein LX</fullName>
    </alternativeName>
</protein>
<sequence length="86" mass="10344">MSEIKFYLVKGSALFGESHYPEKRKFVKIVRALNEKQAIEYIYSYFGSKNKIKRYNIKIEQISEIKEEEIPDRRIRELAKIDKIIM</sequence>
<comment type="subunit">
    <text evidence="1">Part of the 50S ribosomal subunit. Binds 23S rRNA.</text>
</comment>
<comment type="similarity">
    <text evidence="1">Belongs to the eukaryotic ribosomal protein eL20 family.</text>
</comment>
<proteinExistence type="inferred from homology"/>
<evidence type="ECO:0000255" key="1">
    <source>
        <dbReference type="HAMAP-Rule" id="MF_00273"/>
    </source>
</evidence>
<evidence type="ECO:0000305" key="2"/>
<gene>
    <name evidence="1" type="primary">rpl18a</name>
    <name evidence="1" type="synonym">rpl20e</name>
    <name evidence="1" type="synonym">rplX</name>
    <name type="ordered locus">M1425_1756</name>
</gene>
<feature type="chain" id="PRO_1000204758" description="Large ribosomal subunit protein eL20">
    <location>
        <begin position="1"/>
        <end position="86"/>
    </location>
</feature>
<reference key="1">
    <citation type="journal article" date="2009" name="Proc. Natl. Acad. Sci. U.S.A.">
        <title>Biogeography of the Sulfolobus islandicus pan-genome.</title>
        <authorList>
            <person name="Reno M.L."/>
            <person name="Held N.L."/>
            <person name="Fields C.J."/>
            <person name="Burke P.V."/>
            <person name="Whitaker R.J."/>
        </authorList>
    </citation>
    <scope>NUCLEOTIDE SEQUENCE [LARGE SCALE GENOMIC DNA]</scope>
    <source>
        <strain>M.14.25 / Kamchatka #1</strain>
    </source>
</reference>
<keyword id="KW-0687">Ribonucleoprotein</keyword>
<keyword id="KW-0689">Ribosomal protein</keyword>
<keyword id="KW-0694">RNA-binding</keyword>
<keyword id="KW-0699">rRNA-binding</keyword>
<organism>
    <name type="scientific">Saccharolobus islandicus (strain M.14.25 / Kamchatka #1)</name>
    <name type="common">Sulfolobus islandicus</name>
    <dbReference type="NCBI Taxonomy" id="427317"/>
    <lineage>
        <taxon>Archaea</taxon>
        <taxon>Thermoproteota</taxon>
        <taxon>Thermoprotei</taxon>
        <taxon>Sulfolobales</taxon>
        <taxon>Sulfolobaceae</taxon>
        <taxon>Saccharolobus</taxon>
    </lineage>
</organism>
<accession>C3MXG8</accession>
<dbReference type="EMBL" id="CP001400">
    <property type="protein sequence ID" value="ACP38502.1"/>
    <property type="molecule type" value="Genomic_DNA"/>
</dbReference>
<dbReference type="RefSeq" id="WP_012711732.1">
    <property type="nucleotide sequence ID" value="NC_012588.1"/>
</dbReference>
<dbReference type="SMR" id="C3MXG8"/>
<dbReference type="GeneID" id="84062107"/>
<dbReference type="KEGG" id="sia:M1425_1756"/>
<dbReference type="HOGENOM" id="CLU_177460_0_0_2"/>
<dbReference type="Proteomes" id="UP000001350">
    <property type="component" value="Chromosome"/>
</dbReference>
<dbReference type="GO" id="GO:1990904">
    <property type="term" value="C:ribonucleoprotein complex"/>
    <property type="evidence" value="ECO:0007669"/>
    <property type="project" value="UniProtKB-KW"/>
</dbReference>
<dbReference type="GO" id="GO:0005840">
    <property type="term" value="C:ribosome"/>
    <property type="evidence" value="ECO:0007669"/>
    <property type="project" value="UniProtKB-KW"/>
</dbReference>
<dbReference type="GO" id="GO:0070180">
    <property type="term" value="F:large ribosomal subunit rRNA binding"/>
    <property type="evidence" value="ECO:0007669"/>
    <property type="project" value="UniProtKB-UniRule"/>
</dbReference>
<dbReference type="GO" id="GO:0003735">
    <property type="term" value="F:structural constituent of ribosome"/>
    <property type="evidence" value="ECO:0007669"/>
    <property type="project" value="InterPro"/>
</dbReference>
<dbReference type="GO" id="GO:0006412">
    <property type="term" value="P:translation"/>
    <property type="evidence" value="ECO:0007669"/>
    <property type="project" value="UniProtKB-UniRule"/>
</dbReference>
<dbReference type="Gene3D" id="3.10.20.10">
    <property type="match status" value="1"/>
</dbReference>
<dbReference type="HAMAP" id="MF_00273">
    <property type="entry name" value="Ribosomal_eL20"/>
    <property type="match status" value="1"/>
</dbReference>
<dbReference type="InterPro" id="IPR028877">
    <property type="entry name" value="Ribosomal_eL20"/>
</dbReference>
<dbReference type="InterPro" id="IPR023573">
    <property type="entry name" value="Ribosomal_eL20_dom"/>
</dbReference>
<dbReference type="NCBIfam" id="NF001981">
    <property type="entry name" value="PRK00773.1-1"/>
    <property type="match status" value="1"/>
</dbReference>
<dbReference type="Pfam" id="PF01775">
    <property type="entry name" value="Ribosomal_L18A"/>
    <property type="match status" value="1"/>
</dbReference>
<dbReference type="SUPFAM" id="SSF160374">
    <property type="entry name" value="RplX-like"/>
    <property type="match status" value="1"/>
</dbReference>
<name>RL18A_SACI4</name>